<comment type="function">
    <text evidence="1">Involved in peptidoglycan biosynthesis. Transports lipid-linked peptidoglycan precursors from the inner to the outer leaflet of the cytoplasmic membrane.</text>
</comment>
<comment type="pathway">
    <text evidence="1">Cell wall biogenesis; peptidoglycan biosynthesis.</text>
</comment>
<comment type="subcellular location">
    <subcellularLocation>
        <location evidence="1">Cell inner membrane</location>
        <topology evidence="2">Multi-pass membrane protein</topology>
    </subcellularLocation>
</comment>
<comment type="similarity">
    <text evidence="3">Belongs to the MurJ/MviN family.</text>
</comment>
<comment type="sequence caution" evidence="3">
    <conflict type="erroneous initiation">
        <sequence resource="EMBL-CDS" id="AAF39705"/>
    </conflict>
    <text>Extended N-terminus.</text>
</comment>
<sequence length="536" mass="59624">MSKDDEGSLVRSLFNLLSGTFFSRLTGMLREIVMATYFGADPLVASFWLAFRTIFFLRKLLGGPILGLAFIPHFEFLRAQNISRAAFFFRSFSKFFCYSAIVFTLVIELGLGVWCSCVTGSLFDTLLLTIILLPSGIFLMMYTVNSTLLHCEKKFLSVGLAPSVVNVLWIGTVFLARNYNPRNRIFGLAIVLVIGFILEWAVTLPGVIKFLGRSTETPKERDSIRALIAPLSLGLLSMGIFQLNLLCDMWLARYINEVGPLYLMYSVRIQQLPVHLFGLGVFTVLLPAISRCVQDNEHQQGYDLLRFSLKLTVAVMLVMTMGLLLLALPGVRVLYEHGVFPTTAVHAIVEVLRGYSGSIIPMALAPLVSALFYARRNYKVPMLVGIAAAVANIVLNVIGCLVFKHVSVLAYATSLASWGQLVILWYCAGKSLPTYKGLMWRTFRESGKTVFTTVLAAFITVGINVFTNTTYIVFIHPLTTPIKPLTSLLDQCGVFFAESALFLAILFGLAKVLKAEDLMNLTSFQYWKGHQSILRN</sequence>
<name>MURJ_CHLMU</name>
<feature type="chain" id="PRO_0000182003" description="Probable lipid II flippase MurJ">
    <location>
        <begin position="1"/>
        <end position="536"/>
    </location>
</feature>
<feature type="transmembrane region" description="Helical" evidence="2">
    <location>
        <begin position="31"/>
        <end position="51"/>
    </location>
</feature>
<feature type="transmembrane region" description="Helical" evidence="2">
    <location>
        <begin position="54"/>
        <end position="74"/>
    </location>
</feature>
<feature type="transmembrane region" description="Helical" evidence="2">
    <location>
        <begin position="95"/>
        <end position="115"/>
    </location>
</feature>
<feature type="transmembrane region" description="Helical" evidence="2">
    <location>
        <begin position="122"/>
        <end position="142"/>
    </location>
</feature>
<feature type="transmembrane region" description="Helical" evidence="2">
    <location>
        <begin position="155"/>
        <end position="175"/>
    </location>
</feature>
<feature type="transmembrane region" description="Helical" evidence="2">
    <location>
        <begin position="185"/>
        <end position="205"/>
    </location>
</feature>
<feature type="transmembrane region" description="Helical" evidence="2">
    <location>
        <begin position="226"/>
        <end position="246"/>
    </location>
</feature>
<feature type="transmembrane region" description="Helical" evidence="2">
    <location>
        <begin position="269"/>
        <end position="289"/>
    </location>
</feature>
<feature type="transmembrane region" description="Helical" evidence="2">
    <location>
        <begin position="311"/>
        <end position="331"/>
    </location>
</feature>
<feature type="transmembrane region" description="Helical" evidence="2">
    <location>
        <begin position="354"/>
        <end position="374"/>
    </location>
</feature>
<feature type="transmembrane region" description="Helical" evidence="2">
    <location>
        <begin position="383"/>
        <end position="403"/>
    </location>
</feature>
<feature type="transmembrane region" description="Helical" evidence="2">
    <location>
        <begin position="408"/>
        <end position="428"/>
    </location>
</feature>
<feature type="transmembrane region" description="Helical" evidence="2">
    <location>
        <begin position="455"/>
        <end position="475"/>
    </location>
</feature>
<feature type="transmembrane region" description="Helical" evidence="2">
    <location>
        <begin position="493"/>
        <end position="513"/>
    </location>
</feature>
<reference key="1">
    <citation type="journal article" date="2000" name="Nucleic Acids Res.">
        <title>Genome sequences of Chlamydia trachomatis MoPn and Chlamydia pneumoniae AR39.</title>
        <authorList>
            <person name="Read T.D."/>
            <person name="Brunham R.C."/>
            <person name="Shen C."/>
            <person name="Gill S.R."/>
            <person name="Heidelberg J.F."/>
            <person name="White O."/>
            <person name="Hickey E.K."/>
            <person name="Peterson J.D."/>
            <person name="Utterback T.R."/>
            <person name="Berry K.J."/>
            <person name="Bass S."/>
            <person name="Linher K.D."/>
            <person name="Weidman J.F."/>
            <person name="Khouri H.M."/>
            <person name="Craven B."/>
            <person name="Bowman C."/>
            <person name="Dodson R.J."/>
            <person name="Gwinn M.L."/>
            <person name="Nelson W.C."/>
            <person name="DeBoy R.T."/>
            <person name="Kolonay J.F."/>
            <person name="McClarty G."/>
            <person name="Salzberg S.L."/>
            <person name="Eisen J.A."/>
            <person name="Fraser C.M."/>
        </authorList>
    </citation>
    <scope>NUCLEOTIDE SEQUENCE [LARGE SCALE GENOMIC DNA]</scope>
    <source>
        <strain>MoPn / Nigg</strain>
    </source>
</reference>
<dbReference type="EMBL" id="AE002160">
    <property type="protein sequence ID" value="AAF39705.1"/>
    <property type="status" value="ALT_INIT"/>
    <property type="molecule type" value="Genomic_DNA"/>
</dbReference>
<dbReference type="PIR" id="A81650">
    <property type="entry name" value="A81650"/>
</dbReference>
<dbReference type="RefSeq" id="WP_010231926.1">
    <property type="nucleotide sequence ID" value="NZ_CP063055.1"/>
</dbReference>
<dbReference type="SMR" id="Q9PJB9"/>
<dbReference type="GeneID" id="1246282"/>
<dbReference type="KEGG" id="cmu:TC_0913"/>
<dbReference type="eggNOG" id="COG0728">
    <property type="taxonomic scope" value="Bacteria"/>
</dbReference>
<dbReference type="HOGENOM" id="CLU_497572_0_0_0"/>
<dbReference type="OrthoDB" id="9804143at2"/>
<dbReference type="UniPathway" id="UPA00219"/>
<dbReference type="Proteomes" id="UP000000800">
    <property type="component" value="Chromosome"/>
</dbReference>
<dbReference type="GO" id="GO:0005886">
    <property type="term" value="C:plasma membrane"/>
    <property type="evidence" value="ECO:0007669"/>
    <property type="project" value="UniProtKB-SubCell"/>
</dbReference>
<dbReference type="GO" id="GO:0071555">
    <property type="term" value="P:cell wall organization"/>
    <property type="evidence" value="ECO:0007669"/>
    <property type="project" value="UniProtKB-KW"/>
</dbReference>
<dbReference type="GO" id="GO:0009252">
    <property type="term" value="P:peptidoglycan biosynthetic process"/>
    <property type="evidence" value="ECO:0007669"/>
    <property type="project" value="UniProtKB-UniPathway"/>
</dbReference>
<dbReference type="GO" id="GO:0008360">
    <property type="term" value="P:regulation of cell shape"/>
    <property type="evidence" value="ECO:0007669"/>
    <property type="project" value="UniProtKB-KW"/>
</dbReference>
<dbReference type="CDD" id="cd13123">
    <property type="entry name" value="MATE_MurJ_like"/>
    <property type="match status" value="1"/>
</dbReference>
<dbReference type="InterPro" id="IPR052031">
    <property type="entry name" value="Membrane_Transporter-Flippase"/>
</dbReference>
<dbReference type="InterPro" id="IPR004268">
    <property type="entry name" value="MurJ"/>
</dbReference>
<dbReference type="PANTHER" id="PTHR43549">
    <property type="entry name" value="MULTIDRUG RESISTANCE PROTEIN YPNP-RELATED"/>
    <property type="match status" value="1"/>
</dbReference>
<dbReference type="PANTHER" id="PTHR43549:SF3">
    <property type="entry name" value="MULTIDRUG RESISTANCE PROTEIN YPNP-RELATED"/>
    <property type="match status" value="1"/>
</dbReference>
<dbReference type="Pfam" id="PF03023">
    <property type="entry name" value="MurJ"/>
    <property type="match status" value="1"/>
</dbReference>
<dbReference type="PRINTS" id="PR01806">
    <property type="entry name" value="VIRFACTRMVIN"/>
</dbReference>
<proteinExistence type="inferred from homology"/>
<keyword id="KW-0997">Cell inner membrane</keyword>
<keyword id="KW-1003">Cell membrane</keyword>
<keyword id="KW-0133">Cell shape</keyword>
<keyword id="KW-0961">Cell wall biogenesis/degradation</keyword>
<keyword id="KW-0472">Membrane</keyword>
<keyword id="KW-0573">Peptidoglycan synthesis</keyword>
<keyword id="KW-0812">Transmembrane</keyword>
<keyword id="KW-1133">Transmembrane helix</keyword>
<keyword id="KW-0813">Transport</keyword>
<evidence type="ECO:0000250" key="1">
    <source>
        <dbReference type="UniProtKB" id="P0AF16"/>
    </source>
</evidence>
<evidence type="ECO:0000255" key="2"/>
<evidence type="ECO:0000305" key="3"/>
<gene>
    <name type="primary">murJ</name>
    <name type="synonym">mviN</name>
    <name type="ordered locus">TC_0913</name>
</gene>
<accession>Q9PJB9</accession>
<organism>
    <name type="scientific">Chlamydia muridarum (strain MoPn / Nigg)</name>
    <dbReference type="NCBI Taxonomy" id="243161"/>
    <lineage>
        <taxon>Bacteria</taxon>
        <taxon>Pseudomonadati</taxon>
        <taxon>Chlamydiota</taxon>
        <taxon>Chlamydiia</taxon>
        <taxon>Chlamydiales</taxon>
        <taxon>Chlamydiaceae</taxon>
        <taxon>Chlamydia/Chlamydophila group</taxon>
        <taxon>Chlamydia</taxon>
    </lineage>
</organism>
<protein>
    <recommendedName>
        <fullName evidence="1">Probable lipid II flippase MurJ</fullName>
    </recommendedName>
</protein>